<reference key="1">
    <citation type="journal article" date="2012" name="BMC Genomics">
        <title>Tools to kill: Genome of one of the most destructive plant pathogenic fungi Macrophomina phaseolina.</title>
        <authorList>
            <person name="Islam M.S."/>
            <person name="Haque M.S."/>
            <person name="Islam M.M."/>
            <person name="Emdad E.M."/>
            <person name="Halim A."/>
            <person name="Hossen Q.M.M."/>
            <person name="Hossain M.Z."/>
            <person name="Ahmed B."/>
            <person name="Rahim S."/>
            <person name="Rahman M.S."/>
            <person name="Alam M.M."/>
            <person name="Hou S."/>
            <person name="Wan X."/>
            <person name="Saito J.A."/>
            <person name="Alam M."/>
        </authorList>
    </citation>
    <scope>NUCLEOTIDE SEQUENCE [LARGE SCALE GENOMIC DNA]</scope>
    <source>
        <strain>MS6</strain>
    </source>
</reference>
<reference key="2">
    <citation type="journal article" date="2020" name="Nat. Commun.">
        <title>Synthetic biology based construction of biological activity-related library of fungal decalin-containing diterpenoid pyrones.</title>
        <authorList>
            <person name="Tsukada K."/>
            <person name="Shinki S."/>
            <person name="Kaneko A."/>
            <person name="Murakami K."/>
            <person name="Irie K."/>
            <person name="Murai M."/>
            <person name="Miyoshi H."/>
            <person name="Dan S."/>
            <person name="Kawaji K."/>
            <person name="Hayashi H."/>
            <person name="Kodama E.N."/>
            <person name="Hori A."/>
            <person name="Salim E."/>
            <person name="Kuraishi T."/>
            <person name="Hirata N."/>
            <person name="Kanda Y."/>
            <person name="Asai T."/>
        </authorList>
    </citation>
    <scope>FUNCTION</scope>
    <scope>PATHWAY</scope>
    <scope>BIOTECHNOLOGY</scope>
</reference>
<comment type="function">
    <text evidence="7 10">Non-reducing polyketide synthase; part of the gene cluster that mediates the biosynthesis of diterpenoid pyrones (PubMed:32286350). The first step of the pathway is the synthesis of the alpha-pyrone moiety by the polyketide synthase dpmpA via condensation of one acetyl-CoA starter unit with 3 malonyl-CoA units and 2 methylations (Probable). The alpha-pyrone is then combined with geranylgeranyl pyrophosphate (GGPP) formed by the GGPP synthase dpmpD through the action of the prenyltransferase dpmpC to yield a linear alpha-pyrone diterpenoid (Probable). Subsequent steps in the diterpenoid pyrone biosynthetic pathway involve the decalin core formation, which is initiated by the epoxidation of the C10-C11 olefin by the FAD-dependent oxidoreductase dpmpE, and is followed by a cyclization cascade catalyzed by the terpene cyclase dpmpB (Probable). The short chain dehydrogenase/reductase dpmpG then oxidizes the 8S hydroxy group to a ketone and the short chain dehydrogenase/reductase dpmpH reduces the ketone to the 8R hydroxy group to yield higginsianin B (PubMed:32286350). Higginsianin B is further methylated by the methyltransferase dpmpI to produce the intermediate named FDDP B (PubMed:32286350). The cytochrome P450 monooxygenase dpmpJ then oxidizes the C-26 methyl to primary alcohol, producing the final diterpenoid pyrone with a C-26 primary alcohol on the gamma-pyrone moiety named FDDP C (PubMed:32286350).</text>
</comment>
<comment type="pathway">
    <text evidence="10">Secondary metabolite biosynthesis; terpenoid biosynthesis.</text>
</comment>
<comment type="domain">
    <text evidence="9">Multidomain protein; including a starter unit:ACP transacylase (SAT) that selects the starter unit; a ketosynthase (KS) that catalyzes repeated decarboxylative condensation to elongate the polyketide backbone; a malonyl-CoA:ACP transacylase (MAT) that selects and transfers the extender unit malonyl-CoA; a product template (PT) domain that controls the immediate cyclization regioselectivity of the reactive polyketide backbone; a methyltransferase (CMeT) domain responsible for methylations; and 2 acyl-carrier protein (ACP) domains that serve as the tether of the growing and completed polyketide via its phosphopantetheinyl arm.</text>
</comment>
<comment type="biotechnology">
    <text evidence="7">Diterpenoid pyrones display various biological activities and FDDP C shows anti-cancer and anti-HIV activities (PubMed:32286350). FDDP C also shows inhibitory activity of 42-mer-amyloid beta aggregation that is involved in the pathogenesis of Alzheimer's disease (PubMed:32286350).</text>
</comment>
<proteinExistence type="evidence at protein level"/>
<gene>
    <name evidence="8" type="primary">dpmpA</name>
    <name type="ORF">MPH_09202</name>
</gene>
<accession>K2QVI8</accession>
<evidence type="ECO:0000255" key="1"/>
<evidence type="ECO:0000255" key="2">
    <source>
        <dbReference type="PROSITE-ProRule" id="PRU00258"/>
    </source>
</evidence>
<evidence type="ECO:0000255" key="3">
    <source>
        <dbReference type="PROSITE-ProRule" id="PRU01348"/>
    </source>
</evidence>
<evidence type="ECO:0000255" key="4">
    <source>
        <dbReference type="PROSITE-ProRule" id="PRU01363"/>
    </source>
</evidence>
<evidence type="ECO:0000255" key="5">
    <source>
        <dbReference type="PROSITE-ProRule" id="PRU10022"/>
    </source>
</evidence>
<evidence type="ECO:0000256" key="6">
    <source>
        <dbReference type="SAM" id="MobiDB-lite"/>
    </source>
</evidence>
<evidence type="ECO:0000269" key="7">
    <source>
    </source>
</evidence>
<evidence type="ECO:0000303" key="8">
    <source>
    </source>
</evidence>
<evidence type="ECO:0000305" key="9"/>
<evidence type="ECO:0000305" key="10">
    <source>
    </source>
</evidence>
<dbReference type="EC" id="2.3.1.-" evidence="10"/>
<dbReference type="EMBL" id="AHHD01000387">
    <property type="protein sequence ID" value="EKG13736.1"/>
    <property type="molecule type" value="Genomic_DNA"/>
</dbReference>
<dbReference type="SMR" id="K2QVI8"/>
<dbReference type="STRING" id="1126212.K2QVI8"/>
<dbReference type="VEuPathDB" id="FungiDB:MPH_09202"/>
<dbReference type="eggNOG" id="KOG1202">
    <property type="taxonomic scope" value="Eukaryota"/>
</dbReference>
<dbReference type="HOGENOM" id="CLU_000022_6_3_1"/>
<dbReference type="InParanoid" id="K2QVI8"/>
<dbReference type="OrthoDB" id="429813at2759"/>
<dbReference type="UniPathway" id="UPA00213"/>
<dbReference type="Proteomes" id="UP000007129">
    <property type="component" value="Unassembled WGS sequence"/>
</dbReference>
<dbReference type="GO" id="GO:0004315">
    <property type="term" value="F:3-oxoacyl-[acyl-carrier-protein] synthase activity"/>
    <property type="evidence" value="ECO:0007669"/>
    <property type="project" value="InterPro"/>
</dbReference>
<dbReference type="GO" id="GO:0004312">
    <property type="term" value="F:fatty acid synthase activity"/>
    <property type="evidence" value="ECO:0007669"/>
    <property type="project" value="TreeGrafter"/>
</dbReference>
<dbReference type="GO" id="GO:0031177">
    <property type="term" value="F:phosphopantetheine binding"/>
    <property type="evidence" value="ECO:0007669"/>
    <property type="project" value="InterPro"/>
</dbReference>
<dbReference type="GO" id="GO:0006633">
    <property type="term" value="P:fatty acid biosynthetic process"/>
    <property type="evidence" value="ECO:0007669"/>
    <property type="project" value="InterPro"/>
</dbReference>
<dbReference type="GO" id="GO:0044550">
    <property type="term" value="P:secondary metabolite biosynthetic process"/>
    <property type="evidence" value="ECO:0007669"/>
    <property type="project" value="TreeGrafter"/>
</dbReference>
<dbReference type="GO" id="GO:0016114">
    <property type="term" value="P:terpenoid biosynthetic process"/>
    <property type="evidence" value="ECO:0007669"/>
    <property type="project" value="UniProtKB-UniPathway"/>
</dbReference>
<dbReference type="CDD" id="cd00833">
    <property type="entry name" value="PKS"/>
    <property type="match status" value="1"/>
</dbReference>
<dbReference type="Gene3D" id="3.30.70.3290">
    <property type="match status" value="1"/>
</dbReference>
<dbReference type="Gene3D" id="3.40.47.10">
    <property type="match status" value="1"/>
</dbReference>
<dbReference type="Gene3D" id="1.10.1200.10">
    <property type="entry name" value="ACP-like"/>
    <property type="match status" value="2"/>
</dbReference>
<dbReference type="Gene3D" id="3.40.366.10">
    <property type="entry name" value="Malonyl-Coenzyme A Acyl Carrier Protein, domain 2"/>
    <property type="match status" value="2"/>
</dbReference>
<dbReference type="Gene3D" id="3.10.129.110">
    <property type="entry name" value="Polyketide synthase dehydratase"/>
    <property type="match status" value="1"/>
</dbReference>
<dbReference type="Gene3D" id="3.40.50.150">
    <property type="entry name" value="Vaccinia Virus protein VP39"/>
    <property type="match status" value="1"/>
</dbReference>
<dbReference type="InterPro" id="IPR001227">
    <property type="entry name" value="Ac_transferase_dom_sf"/>
</dbReference>
<dbReference type="InterPro" id="IPR036736">
    <property type="entry name" value="ACP-like_sf"/>
</dbReference>
<dbReference type="InterPro" id="IPR014043">
    <property type="entry name" value="Acyl_transferase_dom"/>
</dbReference>
<dbReference type="InterPro" id="IPR016035">
    <property type="entry name" value="Acyl_Trfase/lysoPLipase"/>
</dbReference>
<dbReference type="InterPro" id="IPR018201">
    <property type="entry name" value="Ketoacyl_synth_AS"/>
</dbReference>
<dbReference type="InterPro" id="IPR014031">
    <property type="entry name" value="Ketoacyl_synth_C"/>
</dbReference>
<dbReference type="InterPro" id="IPR014030">
    <property type="entry name" value="Ketoacyl_synth_N"/>
</dbReference>
<dbReference type="InterPro" id="IPR016036">
    <property type="entry name" value="Malonyl_transacylase_ACP-bd"/>
</dbReference>
<dbReference type="InterPro" id="IPR013217">
    <property type="entry name" value="Methyltransf_12"/>
</dbReference>
<dbReference type="InterPro" id="IPR020841">
    <property type="entry name" value="PKS_Beta-ketoAc_synthase_dom"/>
</dbReference>
<dbReference type="InterPro" id="IPR042104">
    <property type="entry name" value="PKS_dehydratase_sf"/>
</dbReference>
<dbReference type="InterPro" id="IPR049900">
    <property type="entry name" value="PKS_mFAS_DH"/>
</dbReference>
<dbReference type="InterPro" id="IPR050091">
    <property type="entry name" value="PKS_NRPS_Biosynth_Enz"/>
</dbReference>
<dbReference type="InterPro" id="IPR020806">
    <property type="entry name" value="PKS_PP-bd"/>
</dbReference>
<dbReference type="InterPro" id="IPR009081">
    <property type="entry name" value="PP-bd_ACP"/>
</dbReference>
<dbReference type="InterPro" id="IPR006162">
    <property type="entry name" value="Ppantetheine_attach_site"/>
</dbReference>
<dbReference type="InterPro" id="IPR029063">
    <property type="entry name" value="SAM-dependent_MTases_sf"/>
</dbReference>
<dbReference type="InterPro" id="IPR016039">
    <property type="entry name" value="Thiolase-like"/>
</dbReference>
<dbReference type="PANTHER" id="PTHR43775">
    <property type="entry name" value="FATTY ACID SYNTHASE"/>
    <property type="match status" value="1"/>
</dbReference>
<dbReference type="PANTHER" id="PTHR43775:SF21">
    <property type="entry name" value="NON-REDUCING POLYKETIDE SYNTHASE AUSA-RELATED"/>
    <property type="match status" value="1"/>
</dbReference>
<dbReference type="Pfam" id="PF00698">
    <property type="entry name" value="Acyl_transf_1"/>
    <property type="match status" value="1"/>
</dbReference>
<dbReference type="Pfam" id="PF18558">
    <property type="entry name" value="HTH_51"/>
    <property type="match status" value="1"/>
</dbReference>
<dbReference type="Pfam" id="PF00109">
    <property type="entry name" value="ketoacyl-synt"/>
    <property type="match status" value="1"/>
</dbReference>
<dbReference type="Pfam" id="PF02801">
    <property type="entry name" value="Ketoacyl-synt_C"/>
    <property type="match status" value="1"/>
</dbReference>
<dbReference type="Pfam" id="PF08242">
    <property type="entry name" value="Methyltransf_12"/>
    <property type="match status" value="1"/>
</dbReference>
<dbReference type="Pfam" id="PF00550">
    <property type="entry name" value="PP-binding"/>
    <property type="match status" value="2"/>
</dbReference>
<dbReference type="SMART" id="SM00827">
    <property type="entry name" value="PKS_AT"/>
    <property type="match status" value="1"/>
</dbReference>
<dbReference type="SMART" id="SM00825">
    <property type="entry name" value="PKS_KS"/>
    <property type="match status" value="1"/>
</dbReference>
<dbReference type="SMART" id="SM00823">
    <property type="entry name" value="PKS_PP"/>
    <property type="match status" value="2"/>
</dbReference>
<dbReference type="SUPFAM" id="SSF47336">
    <property type="entry name" value="ACP-like"/>
    <property type="match status" value="2"/>
</dbReference>
<dbReference type="SUPFAM" id="SSF52151">
    <property type="entry name" value="FabD/lysophospholipase-like"/>
    <property type="match status" value="1"/>
</dbReference>
<dbReference type="SUPFAM" id="SSF55048">
    <property type="entry name" value="Probable ACP-binding domain of malonyl-CoA ACP transacylase"/>
    <property type="match status" value="1"/>
</dbReference>
<dbReference type="SUPFAM" id="SSF53335">
    <property type="entry name" value="S-adenosyl-L-methionine-dependent methyltransferases"/>
    <property type="match status" value="1"/>
</dbReference>
<dbReference type="SUPFAM" id="SSF53901">
    <property type="entry name" value="Thiolase-like"/>
    <property type="match status" value="1"/>
</dbReference>
<dbReference type="PROSITE" id="PS50075">
    <property type="entry name" value="CARRIER"/>
    <property type="match status" value="2"/>
</dbReference>
<dbReference type="PROSITE" id="PS00606">
    <property type="entry name" value="KS3_1"/>
    <property type="match status" value="1"/>
</dbReference>
<dbReference type="PROSITE" id="PS52004">
    <property type="entry name" value="KS3_2"/>
    <property type="match status" value="1"/>
</dbReference>
<dbReference type="PROSITE" id="PS00012">
    <property type="entry name" value="PHOSPHOPANTETHEINE"/>
    <property type="match status" value="1"/>
</dbReference>
<dbReference type="PROSITE" id="PS52019">
    <property type="entry name" value="PKS_MFAS_DH"/>
    <property type="match status" value="1"/>
</dbReference>
<keyword id="KW-0511">Multifunctional enzyme</keyword>
<keyword id="KW-0596">Phosphopantetheine</keyword>
<keyword id="KW-0597">Phosphoprotein</keyword>
<keyword id="KW-1185">Reference proteome</keyword>
<keyword id="KW-0808">Transferase</keyword>
<protein>
    <recommendedName>
        <fullName evidence="8">Non-reducing polyketide synthase dpmpA</fullName>
        <ecNumber evidence="10">2.3.1.-</ecNumber>
    </recommendedName>
    <alternativeName>
        <fullName evidence="8">Diterpenoid pyrone biosynthesis cluster protein A</fullName>
    </alternativeName>
</protein>
<feature type="chain" id="PRO_0000451526" description="Non-reducing polyketide synthase dpmpA">
    <location>
        <begin position="1"/>
        <end position="2214"/>
    </location>
</feature>
<feature type="domain" description="Ketosynthase family 3 (KS3)" evidence="3">
    <location>
        <begin position="372"/>
        <end position="784"/>
    </location>
</feature>
<feature type="domain" description="PKS/mFAS DH" evidence="4">
    <location>
        <begin position="1255"/>
        <end position="1566"/>
    </location>
</feature>
<feature type="domain" description="Carrier 1" evidence="2">
    <location>
        <begin position="1620"/>
        <end position="1695"/>
    </location>
</feature>
<feature type="domain" description="Carrier 2" evidence="2">
    <location>
        <begin position="1722"/>
        <end position="1802"/>
    </location>
</feature>
<feature type="region of interest" description="N-terminal acylcarrier protein transacylase domain (SAT)" evidence="1">
    <location>
        <begin position="75"/>
        <end position="178"/>
    </location>
</feature>
<feature type="region of interest" description="Malonyl-CoA:ACP transacylase (MAT) domain" evidence="1">
    <location>
        <begin position="888"/>
        <end position="1184"/>
    </location>
</feature>
<feature type="region of interest" description="N-terminal hotdog fold" evidence="4">
    <location>
        <begin position="1255"/>
        <end position="1389"/>
    </location>
</feature>
<feature type="region of interest" description="Product template (PT) domain" evidence="1">
    <location>
        <begin position="1265"/>
        <end position="1560"/>
    </location>
</feature>
<feature type="region of interest" description="C-terminal hotdog fold" evidence="4">
    <location>
        <begin position="1416"/>
        <end position="1566"/>
    </location>
</feature>
<feature type="region of interest" description="Disordered" evidence="6">
    <location>
        <begin position="1698"/>
        <end position="1728"/>
    </location>
</feature>
<feature type="region of interest" description="Disordered" evidence="6">
    <location>
        <begin position="1805"/>
        <end position="1827"/>
    </location>
</feature>
<feature type="region of interest" description="Methyltransferase (CMeT) domain" evidence="1">
    <location>
        <begin position="1958"/>
        <end position="2210"/>
    </location>
</feature>
<feature type="compositionally biased region" description="Polar residues" evidence="6">
    <location>
        <begin position="1711"/>
        <end position="1726"/>
    </location>
</feature>
<feature type="compositionally biased region" description="Basic and acidic residues" evidence="6">
    <location>
        <begin position="1810"/>
        <end position="1827"/>
    </location>
</feature>
<feature type="active site" description="For beta-ketoacyl synthase activity" evidence="3">
    <location>
        <position position="532"/>
    </location>
</feature>
<feature type="active site" description="For beta-ketoacyl synthase activity" evidence="3">
    <location>
        <position position="667"/>
    </location>
</feature>
<feature type="active site" description="For beta-ketoacyl synthase activity" evidence="3">
    <location>
        <position position="707"/>
    </location>
</feature>
<feature type="active site" description="For acyl/malonyl transferase activity" evidence="5">
    <location>
        <position position="974"/>
    </location>
</feature>
<feature type="modified residue" description="O-(pantetheine 4'-phosphoryl)serine" evidence="2">
    <location>
        <position position="1654"/>
    </location>
</feature>
<feature type="modified residue" description="O-(pantetheine 4'-phosphoryl)serine" evidence="2">
    <location>
        <position position="1762"/>
    </location>
</feature>
<sequence>MSVELPSLVVCGPQLEEIPDATYLARLRSSLLHDPYLRSLKQEALELHEMWPLLSATEPSLARFDAAPLLHSFAEWIRTGDSHVLRLAGGTLRNTQLALLTVLAHLLEYTTYLQHRHHHDHAQSEHAVLTAVHDGGVQGLSIGVLSAIAISCSQSRMHLARYGAVALRLAVCAGAWKDLDEMHAAEPPVCLEARWEGGGARAFKAVLDSYPQAYAHVREDASNATVIVPESSAAAMARKLEEDGIEARQVGLQGLSHRPDHFAACQKLFNLCSSLPMLRFPEHCHPLVPLTRNGNAEAVDDGASLHEMALRCILLEKPDSAAITAQCVAAISRQAGEPRVLLLGRVECIPRSVPARLIRPMAAGHSLYVYPDESIAIVGASCRFAGSETPAGFWDTLRERRSTLGKAPVWRGYGSEEEPFWGNFLASAGAFDHAFFRKSPREAAYMDPQHRLALHLAYEALESGGYFNPAAGTQTYDVGCYVGVYSSDYEDNVNARPPTPFSFTGTARAFASGRISQFFGWTGPSLIVDTACSSSGVAIHTACKAIQSGECTMALAGGVNLMTSPKSHQNLAAASLMSRTGQCKPFDASADGYCRGEGGGFVLLKRLSSAVADNDRVLGVLAASAINNSKGSLTITAPSLESQAALYQSVLRKAGMQPDQVSYVEAHGTGTQKGDPVECHSLRRVFGRSSRNSPPLRFGSVKGNIGHSEGASGVASLVKVLLMLQHGLIAPQANFSVLNPAAPNLEEANMEIPLYLQPWDAAFRAACVNNYGAAGNNTAMIVCQPPATQPVSRPSSVQKRHQYPFMLTAHSDASLRQHCRILLQFVEDQQAWAGDDLLASLAFHLAQRQSHQLGYRTAFSARSIDDLKARLGEQNTQTRGNCNPVVLVFAGQTGHRPRLSEEAYHSSFLLQHHLDRCDRTLQTLGLRGLFPQVFGTQAVDDLVDLHCMLFSIQYATAAAWIDAGLDVRKLVGHSLGQLTALCVARVLTLRDALKMISGRAALIQSKWGPEQGCMLSVDSDAVTVRALIDSMASEEKVEIACYNAPSSHVVVGKAGATAAFESAALSAGVRTKRLAITHAFHSPMVDSIMEDYESLLRELQFHSPTIPIEPCEQSGGSWENLTPERVARQSRAPVYFGAAVSRVERELGSCVWLEAGAGPAGVTMARRAASSSSHAFLSARLGSPDAMDSLADTTLSLWREGVRVQFWPFHPWQRHCFRLLELPPYQFETTHHWLPFASAPESAAQQPTTANDVAPQLVSVVRSSGGADPEAAEFTINQHSEEYALFVGGRTVLGHALSPPSVYLESAARALGLVSAAAGGPAALPPHFEQVQLHAPLGIDPRRRIRLRLQKHNTSAWEFVFDSQAPALDGGQTFQLQASGIIKSQEQDRAVAGPYRPLLRRLIDHERCRVLLEDSGASVVQGAFVKNILGRVASYEDSYFGIRSITSKGHEAVGVVDVPEIAHQRCAETRVNPPLLDNFMLVAEMHAGNLDACGSDQMYVCNGFDALVPHSNDGSLRGPFTVYSKLERESDRVFVGDVFVLTGGQKTLSLAILGARFSKVPVRSLQRALEAANGSPNVRTAEALDHSAVAIEARDSALTSPPIRPHAPPSSDAVSTISLNEVKTTTERVISETTGVPRERINDATLLGDLGVDSLMATELQVRFSDVLHVDLAIGTLCEHGMTAGRLCQEIHSRLSGVPQLSPHDTDRSSDLSAGQPPSTPKASTQEQEHFIVELSKLLAEHLNCSPDIPPETPLALMGLDSLLAIQLASDMESRFGKKSSPMNIDENTTFSDLCRVLSGADLPGFPRTSDNRRSEEGSVGHVGPEKSEASFFREREDVIKLEFDRAKQRYGVFSEQAGLAGFYARVYPRQMALVLAYIVEAFRTLGCDVATLRAGERLPPIPHEPRYEKLVRRYLQLLEDAGLITSSGEHPPAHLRTAKALEHAESSRLHRAILADFPAYRPDHRLLQLTGPRLADCVSGKVDPLQLLFHGPASRQLLEAFYVSSPMFATATRMMSEFVGQLLRKHGGCSERLRVLEVGAGTGATTQQLLDQLVASGAAFTYTFTDVSSSLVAAARRRLEARYAAAGHEMHFAVLDIERPPPQRLLHSQDLVVASNVLHATRSLSDTCSNVQRLLRPGCGVLCLLELTRPLPWLDCVFGLLDGWWRFADSRTYPLVDEWRWKACLLNAGFRHVDWTDDESREADLFRWILALA</sequence>
<organism>
    <name type="scientific">Macrophomina phaseolina (strain MS6)</name>
    <name type="common">Charcoal rot fungus</name>
    <dbReference type="NCBI Taxonomy" id="1126212"/>
    <lineage>
        <taxon>Eukaryota</taxon>
        <taxon>Fungi</taxon>
        <taxon>Dikarya</taxon>
        <taxon>Ascomycota</taxon>
        <taxon>Pezizomycotina</taxon>
        <taxon>Dothideomycetes</taxon>
        <taxon>Dothideomycetes incertae sedis</taxon>
        <taxon>Botryosphaeriales</taxon>
        <taxon>Botryosphaeriaceae</taxon>
        <taxon>Macrophomina</taxon>
    </lineage>
</organism>
<name>DPMPA_MACPH</name>